<dbReference type="EC" id="2.7.7.48" evidence="1"/>
<dbReference type="EMBL" id="AB126192">
    <property type="protein sequence ID" value="BAD24938.1"/>
    <property type="molecule type" value="Genomic_RNA"/>
</dbReference>
<dbReference type="RefSeq" id="YP_089653.1">
    <property type="nucleotide sequence ID" value="NC_006308.2"/>
</dbReference>
<dbReference type="SMR" id="Q6I7C3"/>
<dbReference type="GeneID" id="3077364"/>
<dbReference type="KEGG" id="vg:3077364"/>
<dbReference type="OrthoDB" id="2346at10239"/>
<dbReference type="Proteomes" id="UP000008286">
    <property type="component" value="Genome"/>
</dbReference>
<dbReference type="GO" id="GO:0030430">
    <property type="term" value="C:host cell cytoplasm"/>
    <property type="evidence" value="ECO:0007669"/>
    <property type="project" value="UniProtKB-SubCell"/>
</dbReference>
<dbReference type="GO" id="GO:0042025">
    <property type="term" value="C:host cell nucleus"/>
    <property type="evidence" value="ECO:0007669"/>
    <property type="project" value="UniProtKB-SubCell"/>
</dbReference>
<dbReference type="GO" id="GO:0000166">
    <property type="term" value="F:nucleotide binding"/>
    <property type="evidence" value="ECO:0007669"/>
    <property type="project" value="UniProtKB-UniRule"/>
</dbReference>
<dbReference type="GO" id="GO:0003723">
    <property type="term" value="F:RNA binding"/>
    <property type="evidence" value="ECO:0007669"/>
    <property type="project" value="InterPro"/>
</dbReference>
<dbReference type="GO" id="GO:0003968">
    <property type="term" value="F:RNA-directed RNA polymerase activity"/>
    <property type="evidence" value="ECO:0007669"/>
    <property type="project" value="UniProtKB-UniRule"/>
</dbReference>
<dbReference type="GO" id="GO:0006351">
    <property type="term" value="P:DNA-templated transcription"/>
    <property type="evidence" value="ECO:0007669"/>
    <property type="project" value="UniProtKB-UniRule"/>
</dbReference>
<dbReference type="GO" id="GO:0039657">
    <property type="term" value="P:symbiont-mediated suppression of host gene expression"/>
    <property type="evidence" value="ECO:0007669"/>
    <property type="project" value="UniProtKB-KW"/>
</dbReference>
<dbReference type="GO" id="GO:0039523">
    <property type="term" value="P:symbiont-mediated suppression of host mRNA transcription via inhibition of RNA polymerase II activity"/>
    <property type="evidence" value="ECO:0007669"/>
    <property type="project" value="UniProtKB-UniRule"/>
</dbReference>
<dbReference type="GO" id="GO:0039694">
    <property type="term" value="P:viral RNA genome replication"/>
    <property type="evidence" value="ECO:0007669"/>
    <property type="project" value="UniProtKB-UniRule"/>
</dbReference>
<dbReference type="GO" id="GO:0019083">
    <property type="term" value="P:viral transcription"/>
    <property type="evidence" value="ECO:0007669"/>
    <property type="project" value="UniProtKB-KW"/>
</dbReference>
<dbReference type="Gene3D" id="6.10.140.720">
    <property type="match status" value="1"/>
</dbReference>
<dbReference type="HAMAP" id="MF_04065">
    <property type="entry name" value="INFV_RDRP"/>
    <property type="match status" value="1"/>
</dbReference>
<dbReference type="InterPro" id="IPR007099">
    <property type="entry name" value="RNA-dir_pol_NSvirus"/>
</dbReference>
<dbReference type="InterPro" id="IPR001407">
    <property type="entry name" value="RNA_pol_PB1_influenza"/>
</dbReference>
<dbReference type="Pfam" id="PF00602">
    <property type="entry name" value="Flu_PB1"/>
    <property type="match status" value="1"/>
</dbReference>
<dbReference type="PIRSF" id="PIRSF000827">
    <property type="entry name" value="RdRPol_OMV"/>
    <property type="match status" value="1"/>
</dbReference>
<dbReference type="PROSITE" id="PS50525">
    <property type="entry name" value="RDRP_SSRNA_NEG_SEG"/>
    <property type="match status" value="1"/>
</dbReference>
<organism>
    <name type="scientific">Influenza C virus (strain C/Ann Arbor/1/1950)</name>
    <dbReference type="NCBI Taxonomy" id="11553"/>
    <lineage>
        <taxon>Viruses</taxon>
        <taxon>Riboviria</taxon>
        <taxon>Orthornavirae</taxon>
        <taxon>Negarnaviricota</taxon>
        <taxon>Polyploviricotina</taxon>
        <taxon>Insthoviricetes</taxon>
        <taxon>Articulavirales</taxon>
        <taxon>Orthomyxoviridae</taxon>
        <taxon>Gammainfluenzavirus</taxon>
        <taxon>Gammainfluenzavirus influenzae</taxon>
        <taxon>Influenza C virus</taxon>
    </lineage>
</organism>
<keyword id="KW-1262">Eukaryotic host gene expression shutoff by virus</keyword>
<keyword id="KW-1191">Eukaryotic host transcription shutoff by virus</keyword>
<keyword id="KW-1035">Host cytoplasm</keyword>
<keyword id="KW-1190">Host gene expression shutoff by virus</keyword>
<keyword id="KW-1048">Host nucleus</keyword>
<keyword id="KW-0945">Host-virus interaction</keyword>
<keyword id="KW-1104">Inhibition of host RNA polymerase II by virus</keyword>
<keyword id="KW-0547">Nucleotide-binding</keyword>
<keyword id="KW-0548">Nucleotidyltransferase</keyword>
<keyword id="KW-0597">Phosphoprotein</keyword>
<keyword id="KW-1185">Reference proteome</keyword>
<keyword id="KW-0696">RNA-directed RNA polymerase</keyword>
<keyword id="KW-0808">Transferase</keyword>
<keyword id="KW-0693">Viral RNA replication</keyword>
<keyword id="KW-1195">Viral transcription</keyword>
<organismHost>
    <name type="scientific">Homo sapiens</name>
    <name type="common">Human</name>
    <dbReference type="NCBI Taxonomy" id="9606"/>
</organismHost>
<organismHost>
    <name type="scientific">Sus scrofa</name>
    <name type="common">Pig</name>
    <dbReference type="NCBI Taxonomy" id="9823"/>
</organismHost>
<comment type="function">
    <text evidence="1">RNA-dependent RNA polymerase which is responsible for replication and transcription of virus RNA segments. The transcription of viral mRNAs occurs by a unique mechanism called cap-snatching. 5' methylated caps of cellular mRNAs are cleaved after 10-13 nucleotides by PA. In turn, these short capped RNAs are used as primers by PB1 for transcription of viral mRNAs. During virus replication, PB1 initiates RNA synthesis and copy vRNA into complementary RNA (cRNA) which in turn serves as a template for the production of more vRNAs.</text>
</comment>
<comment type="catalytic activity">
    <reaction evidence="1">
        <text>RNA(n) + a ribonucleoside 5'-triphosphate = RNA(n+1) + diphosphate</text>
        <dbReference type="Rhea" id="RHEA:21248"/>
        <dbReference type="Rhea" id="RHEA-COMP:14527"/>
        <dbReference type="Rhea" id="RHEA-COMP:17342"/>
        <dbReference type="ChEBI" id="CHEBI:33019"/>
        <dbReference type="ChEBI" id="CHEBI:61557"/>
        <dbReference type="ChEBI" id="CHEBI:140395"/>
        <dbReference type="EC" id="2.7.7.48"/>
    </reaction>
</comment>
<comment type="subunit">
    <text evidence="1">Influenza RNA polymerase is composed of three subunits: PB1, PB2 and PA. Interacts (via N-terminus) with PA (via C-terminus). Interacts (via C-terminus) with PB2 (via N-terminus); this interaction is essential for transcription initiation.</text>
</comment>
<comment type="subcellular location">
    <subcellularLocation>
        <location evidence="1">Host nucleus</location>
    </subcellularLocation>
    <subcellularLocation>
        <location evidence="1">Host cytoplasm</location>
    </subcellularLocation>
</comment>
<comment type="PTM">
    <text evidence="1">Phosphorylated by host PRKCA.</text>
</comment>
<comment type="similarity">
    <text evidence="1">Belongs to the influenza viruses polymerase PB1 family.</text>
</comment>
<feature type="chain" id="PRO_0000269452" description="RNA-directed RNA polymerase catalytic subunit">
    <location>
        <begin position="1"/>
        <end position="754"/>
    </location>
</feature>
<feature type="domain" description="RdRp catalytic" evidence="1">
    <location>
        <begin position="288"/>
        <end position="484"/>
    </location>
</feature>
<feature type="region of interest" description="Promoter-binding site" evidence="1">
    <location>
        <begin position="251"/>
        <end position="258"/>
    </location>
</feature>
<feature type="short sequence motif" description="Nuclear localization signal" evidence="1">
    <location>
        <begin position="189"/>
        <end position="197"/>
    </location>
</feature>
<feature type="short sequence motif" description="Nuclear localization signal" evidence="1">
    <location>
        <begin position="205"/>
        <end position="218"/>
    </location>
</feature>
<sequence>MEINPYLMFLNNDVTSLISTTYPYTGPPPMSHGSSTKYTLETIKRTYDYSRTSVEKTSKVFNIPRRKFCNCLEDKDELVKPTGNVDISSLLGLAEMMEKRMGEGFFKHCVMEAETEILKMHFSRLTEGRQTYDWTSERNMPAATALQLTVDAIKETEGPFKGTTMLEYCNKMIEMLDWKEVKFRKVKTMVRREKDKRSGKEIKTKVPVMGIDSIKHDEFLIRALTINTMAKDGERGKLQRRAIATPGMIVRPFSKIVETVAQKICEKLKESGLPVGGNEKKAKLKTTVTSLNARMNSDQFAVNITGDNSKWNECQQPEAYLALLAYITKDSSDLMKDLCSVAPVLFCNKFVKLGQGIRLSNKRKTKEVIIKAEKMGKYKNLMREEYKNLFEPLEKYIQKDVCFLPGGMLMGMFNMLSTVLGVSTLCYMDEELKAKGCFWTGLQSSDDFVLFAVASNWSNIHWTIRRFNAVCKLIGINMSLEKSYGSLPELFEFTSMFFDGEFVSNLAMELPAFTTAGVNEGVDFTAAMSIIKTNMINNSLSPSTALMALRICLQEFRATYRVHPWDSRVKGGRMKIINEFIKTIENKDGLLIADGGKLMNNISTLHIPEEVLKFEKMDEQYRNRVFNPKNPFTNFDKTIDIFRAHGPIRVEENEAVVSTHSFRTRANRTLLNTDMRAMMAEEKRYQMVCDMFKSVFESADINPPIGAMSIGEAIEEKLLERAKMKRDIGAIEDSEYEEIKDIIRDAKKARIESR</sequence>
<protein>
    <recommendedName>
        <fullName evidence="1">RNA-directed RNA polymerase catalytic subunit</fullName>
        <ecNumber evidence="1">2.7.7.48</ecNumber>
    </recommendedName>
    <alternativeName>
        <fullName evidence="1">Polymerase basic protein 1</fullName>
        <shortName evidence="1">PB1</shortName>
    </alternativeName>
    <alternativeName>
        <fullName evidence="1">RNA-directed RNA polymerase subunit P1</fullName>
    </alternativeName>
</protein>
<evidence type="ECO:0000255" key="1">
    <source>
        <dbReference type="HAMAP-Rule" id="MF_04065"/>
    </source>
</evidence>
<gene>
    <name evidence="1" type="primary">PB1</name>
</gene>
<proteinExistence type="inferred from homology"/>
<name>RDRP_INCAA</name>
<accession>Q6I7C3</accession>
<reference key="1">
    <citation type="journal article" date="2004" name="J. Gen. Virol.">
        <title>Identification of an amino acid residue on influenza C virus M1 protein responsible for formation of the cord-like structures of the virus.</title>
        <authorList>
            <person name="Muraki Y."/>
            <person name="Washioka H."/>
            <person name="Sugawara K."/>
            <person name="Matsuzaki Y."/>
            <person name="Takashita E."/>
            <person name="Hongo S."/>
        </authorList>
    </citation>
    <scope>NUCLEOTIDE SEQUENCE [GENOMIC RNA]</scope>
</reference>